<gene>
    <name evidence="1" type="primary">kdsB</name>
    <name type="ordered locus">FTA_1486</name>
</gene>
<name>KDSB_FRATF</name>
<protein>
    <recommendedName>
        <fullName evidence="1">3-deoxy-manno-octulosonate cytidylyltransferase</fullName>
        <ecNumber evidence="1">2.7.7.38</ecNumber>
    </recommendedName>
    <alternativeName>
        <fullName evidence="1">CMP-2-keto-3-deoxyoctulosonic acid synthase</fullName>
        <shortName evidence="1">CKS</shortName>
        <shortName evidence="1">CMP-KDO synthase</shortName>
    </alternativeName>
</protein>
<evidence type="ECO:0000255" key="1">
    <source>
        <dbReference type="HAMAP-Rule" id="MF_00057"/>
    </source>
</evidence>
<organism>
    <name type="scientific">Francisella tularensis subsp. holarctica (strain FTNF002-00 / FTA)</name>
    <dbReference type="NCBI Taxonomy" id="458234"/>
    <lineage>
        <taxon>Bacteria</taxon>
        <taxon>Pseudomonadati</taxon>
        <taxon>Pseudomonadota</taxon>
        <taxon>Gammaproteobacteria</taxon>
        <taxon>Thiotrichales</taxon>
        <taxon>Francisellaceae</taxon>
        <taxon>Francisella</taxon>
    </lineage>
</organism>
<sequence>MANIHIVIPARLKSTRLPNKMLADIAGKPMIQRVYEQVTKSKFDSIIIATDSQKIKDIAESFGAKVVLTRDDHQSGTDRIAEAVTKLGFADEDIVVNVQGDEPLIPIENIEQAAQLLIDKSEAVVSTLCEKITDVEDIYNPNNVKVVFDKNNYALYFSRASIPFERGFSEKEQINISEFFRHIGIYAYRVAFLKHYAELTVSPIEKYEALEQLRVLYNGYKIAIEQSAKSTPAGVDTLQDLEKVRKLFNV</sequence>
<accession>A7NDA8</accession>
<reference key="1">
    <citation type="journal article" date="2009" name="PLoS ONE">
        <title>Complete genome sequence of Francisella tularensis subspecies holarctica FTNF002-00.</title>
        <authorList>
            <person name="Barabote R.D."/>
            <person name="Xie G."/>
            <person name="Brettin T.S."/>
            <person name="Hinrichs S.H."/>
            <person name="Fey P.D."/>
            <person name="Jay J.J."/>
            <person name="Engle J.L."/>
            <person name="Godbole S.D."/>
            <person name="Noronha J.M."/>
            <person name="Scheuermann R.H."/>
            <person name="Zhou L.W."/>
            <person name="Lion C."/>
            <person name="Dempsey M.P."/>
        </authorList>
    </citation>
    <scope>NUCLEOTIDE SEQUENCE [LARGE SCALE GENOMIC DNA]</scope>
    <source>
        <strain>FTNF002-00 / FTA</strain>
    </source>
</reference>
<keyword id="KW-0963">Cytoplasm</keyword>
<keyword id="KW-0448">Lipopolysaccharide biosynthesis</keyword>
<keyword id="KW-0548">Nucleotidyltransferase</keyword>
<keyword id="KW-0808">Transferase</keyword>
<comment type="function">
    <text evidence="1">Activates KDO (a required 8-carbon sugar) for incorporation into bacterial lipopolysaccharide in Gram-negative bacteria.</text>
</comment>
<comment type="catalytic activity">
    <reaction evidence="1">
        <text>3-deoxy-alpha-D-manno-oct-2-ulosonate + CTP = CMP-3-deoxy-beta-D-manno-octulosonate + diphosphate</text>
        <dbReference type="Rhea" id="RHEA:23448"/>
        <dbReference type="ChEBI" id="CHEBI:33019"/>
        <dbReference type="ChEBI" id="CHEBI:37563"/>
        <dbReference type="ChEBI" id="CHEBI:85986"/>
        <dbReference type="ChEBI" id="CHEBI:85987"/>
        <dbReference type="EC" id="2.7.7.38"/>
    </reaction>
</comment>
<comment type="pathway">
    <text evidence="1">Nucleotide-sugar biosynthesis; CMP-3-deoxy-D-manno-octulosonate biosynthesis; CMP-3-deoxy-D-manno-octulosonate from 3-deoxy-D-manno-octulosonate and CTP: step 1/1.</text>
</comment>
<comment type="pathway">
    <text evidence="1">Bacterial outer membrane biogenesis; lipopolysaccharide biosynthesis.</text>
</comment>
<comment type="subcellular location">
    <subcellularLocation>
        <location evidence="1">Cytoplasm</location>
    </subcellularLocation>
</comment>
<comment type="similarity">
    <text evidence="1">Belongs to the KdsB family.</text>
</comment>
<proteinExistence type="inferred from homology"/>
<dbReference type="EC" id="2.7.7.38" evidence="1"/>
<dbReference type="EMBL" id="CP000803">
    <property type="protein sequence ID" value="ABU61961.1"/>
    <property type="molecule type" value="Genomic_DNA"/>
</dbReference>
<dbReference type="RefSeq" id="WP_003025579.1">
    <property type="nucleotide sequence ID" value="NC_009749.1"/>
</dbReference>
<dbReference type="SMR" id="A7NDA8"/>
<dbReference type="KEGG" id="fta:FTA_1486"/>
<dbReference type="HOGENOM" id="CLU_065038_1_0_6"/>
<dbReference type="UniPathway" id="UPA00030"/>
<dbReference type="UniPathway" id="UPA00358">
    <property type="reaction ID" value="UER00476"/>
</dbReference>
<dbReference type="GO" id="GO:0005829">
    <property type="term" value="C:cytosol"/>
    <property type="evidence" value="ECO:0007669"/>
    <property type="project" value="TreeGrafter"/>
</dbReference>
<dbReference type="GO" id="GO:0008690">
    <property type="term" value="F:3-deoxy-manno-octulosonate cytidylyltransferase activity"/>
    <property type="evidence" value="ECO:0007669"/>
    <property type="project" value="UniProtKB-UniRule"/>
</dbReference>
<dbReference type="GO" id="GO:0033468">
    <property type="term" value="P:CMP-keto-3-deoxy-D-manno-octulosonic acid biosynthetic process"/>
    <property type="evidence" value="ECO:0007669"/>
    <property type="project" value="UniProtKB-UniRule"/>
</dbReference>
<dbReference type="GO" id="GO:0009103">
    <property type="term" value="P:lipopolysaccharide biosynthetic process"/>
    <property type="evidence" value="ECO:0007669"/>
    <property type="project" value="UniProtKB-UniRule"/>
</dbReference>
<dbReference type="CDD" id="cd02517">
    <property type="entry name" value="CMP-KDO-Synthetase"/>
    <property type="match status" value="1"/>
</dbReference>
<dbReference type="FunFam" id="3.90.550.10:FF:000011">
    <property type="entry name" value="3-deoxy-manno-octulosonate cytidylyltransferase"/>
    <property type="match status" value="1"/>
</dbReference>
<dbReference type="Gene3D" id="3.90.550.10">
    <property type="entry name" value="Spore Coat Polysaccharide Biosynthesis Protein SpsA, Chain A"/>
    <property type="match status" value="1"/>
</dbReference>
<dbReference type="HAMAP" id="MF_00057">
    <property type="entry name" value="KdsB"/>
    <property type="match status" value="1"/>
</dbReference>
<dbReference type="InterPro" id="IPR003329">
    <property type="entry name" value="Cytidylyl_trans"/>
</dbReference>
<dbReference type="InterPro" id="IPR004528">
    <property type="entry name" value="KdsB"/>
</dbReference>
<dbReference type="InterPro" id="IPR029044">
    <property type="entry name" value="Nucleotide-diphossugar_trans"/>
</dbReference>
<dbReference type="NCBIfam" id="TIGR00466">
    <property type="entry name" value="kdsB"/>
    <property type="match status" value="1"/>
</dbReference>
<dbReference type="NCBIfam" id="NF003950">
    <property type="entry name" value="PRK05450.1-3"/>
    <property type="match status" value="1"/>
</dbReference>
<dbReference type="NCBIfam" id="NF003952">
    <property type="entry name" value="PRK05450.1-5"/>
    <property type="match status" value="1"/>
</dbReference>
<dbReference type="NCBIfam" id="NF009905">
    <property type="entry name" value="PRK13368.1"/>
    <property type="match status" value="1"/>
</dbReference>
<dbReference type="PANTHER" id="PTHR42866">
    <property type="entry name" value="3-DEOXY-MANNO-OCTULOSONATE CYTIDYLYLTRANSFERASE"/>
    <property type="match status" value="1"/>
</dbReference>
<dbReference type="PANTHER" id="PTHR42866:SF2">
    <property type="entry name" value="3-DEOXY-MANNO-OCTULOSONATE CYTIDYLYLTRANSFERASE, MITOCHONDRIAL"/>
    <property type="match status" value="1"/>
</dbReference>
<dbReference type="Pfam" id="PF02348">
    <property type="entry name" value="CTP_transf_3"/>
    <property type="match status" value="1"/>
</dbReference>
<dbReference type="SUPFAM" id="SSF53448">
    <property type="entry name" value="Nucleotide-diphospho-sugar transferases"/>
    <property type="match status" value="1"/>
</dbReference>
<feature type="chain" id="PRO_0000370066" description="3-deoxy-manno-octulosonate cytidylyltransferase">
    <location>
        <begin position="1"/>
        <end position="250"/>
    </location>
</feature>